<comment type="function">
    <text evidence="1 4">Involved in mitochondrial metabolism by regulating the balance between mitochondrial fusion and fission (PubMed:27863209). May act as a regulator of mitochondrial fission that promotes DNM1L-dependent fission through activation of DNM1L (PubMed:27863209). May be involved in peroxisome organization (By similarity).</text>
</comment>
<comment type="subcellular location">
    <subcellularLocation>
        <location evidence="8">Mitochondrion membrane</location>
        <topology evidence="6">Multi-pass membrane protein</topology>
    </subcellularLocation>
    <subcellularLocation>
        <location evidence="7">Peroxisome membrane</location>
        <topology evidence="2">Multi-pass membrane protein</topology>
    </subcellularLocation>
</comment>
<comment type="induction">
    <text evidence="3">Up-regulated following cold exposure and upon fasting.</text>
</comment>
<comment type="disruption phenotype">
    <text evidence="4">Age-dependent pathologies, characterized by accelerated aging in the retina similar to macular degeneration of the retina (PubMed:27863209). Retina show higher sensitivity to oxidative stress (PubMed:27863209). Defects are caused by impaired balance between mitochondrial fusion and fission (PubMed:27863209).</text>
</comment>
<comment type="similarity">
    <text evidence="6">Belongs to the TMEM135 family.</text>
</comment>
<protein>
    <recommendedName>
        <fullName evidence="9">Transmembrane protein 135</fullName>
    </recommendedName>
    <alternativeName>
        <fullName evidence="5">Peroxisomal membrane protein 52</fullName>
        <shortName evidence="5">PMP52</shortName>
    </alternativeName>
</protein>
<reference key="1">
    <citation type="submission" date="2001-06" db="EMBL/GenBank/DDBJ databases">
        <title>Cloning of a putative transmembrane protein.</title>
        <authorList>
            <person name="Leu M."/>
            <person name="Ehler E."/>
            <person name="Perriard J.-C."/>
        </authorList>
    </citation>
    <scope>NUCLEOTIDE SEQUENCE [MRNA]</scope>
    <source>
        <strain>BALB/cJ</strain>
        <tissue>Heart</tissue>
    </source>
</reference>
<reference key="2">
    <citation type="journal article" date="2005" name="Science">
        <title>The transcriptional landscape of the mammalian genome.</title>
        <authorList>
            <person name="Carninci P."/>
            <person name="Kasukawa T."/>
            <person name="Katayama S."/>
            <person name="Gough J."/>
            <person name="Frith M.C."/>
            <person name="Maeda N."/>
            <person name="Oyama R."/>
            <person name="Ravasi T."/>
            <person name="Lenhard B."/>
            <person name="Wells C."/>
            <person name="Kodzius R."/>
            <person name="Shimokawa K."/>
            <person name="Bajic V.B."/>
            <person name="Brenner S.E."/>
            <person name="Batalov S."/>
            <person name="Forrest A.R."/>
            <person name="Zavolan M."/>
            <person name="Davis M.J."/>
            <person name="Wilming L.G."/>
            <person name="Aidinis V."/>
            <person name="Allen J.E."/>
            <person name="Ambesi-Impiombato A."/>
            <person name="Apweiler R."/>
            <person name="Aturaliya R.N."/>
            <person name="Bailey T.L."/>
            <person name="Bansal M."/>
            <person name="Baxter L."/>
            <person name="Beisel K.W."/>
            <person name="Bersano T."/>
            <person name="Bono H."/>
            <person name="Chalk A.M."/>
            <person name="Chiu K.P."/>
            <person name="Choudhary V."/>
            <person name="Christoffels A."/>
            <person name="Clutterbuck D.R."/>
            <person name="Crowe M.L."/>
            <person name="Dalla E."/>
            <person name="Dalrymple B.P."/>
            <person name="de Bono B."/>
            <person name="Della Gatta G."/>
            <person name="di Bernardo D."/>
            <person name="Down T."/>
            <person name="Engstrom P."/>
            <person name="Fagiolini M."/>
            <person name="Faulkner G."/>
            <person name="Fletcher C.F."/>
            <person name="Fukushima T."/>
            <person name="Furuno M."/>
            <person name="Futaki S."/>
            <person name="Gariboldi M."/>
            <person name="Georgii-Hemming P."/>
            <person name="Gingeras T.R."/>
            <person name="Gojobori T."/>
            <person name="Green R.E."/>
            <person name="Gustincich S."/>
            <person name="Harbers M."/>
            <person name="Hayashi Y."/>
            <person name="Hensch T.K."/>
            <person name="Hirokawa N."/>
            <person name="Hill D."/>
            <person name="Huminiecki L."/>
            <person name="Iacono M."/>
            <person name="Ikeo K."/>
            <person name="Iwama A."/>
            <person name="Ishikawa T."/>
            <person name="Jakt M."/>
            <person name="Kanapin A."/>
            <person name="Katoh M."/>
            <person name="Kawasawa Y."/>
            <person name="Kelso J."/>
            <person name="Kitamura H."/>
            <person name="Kitano H."/>
            <person name="Kollias G."/>
            <person name="Krishnan S.P."/>
            <person name="Kruger A."/>
            <person name="Kummerfeld S.K."/>
            <person name="Kurochkin I.V."/>
            <person name="Lareau L.F."/>
            <person name="Lazarevic D."/>
            <person name="Lipovich L."/>
            <person name="Liu J."/>
            <person name="Liuni S."/>
            <person name="McWilliam S."/>
            <person name="Madan Babu M."/>
            <person name="Madera M."/>
            <person name="Marchionni L."/>
            <person name="Matsuda H."/>
            <person name="Matsuzawa S."/>
            <person name="Miki H."/>
            <person name="Mignone F."/>
            <person name="Miyake S."/>
            <person name="Morris K."/>
            <person name="Mottagui-Tabar S."/>
            <person name="Mulder N."/>
            <person name="Nakano N."/>
            <person name="Nakauchi H."/>
            <person name="Ng P."/>
            <person name="Nilsson R."/>
            <person name="Nishiguchi S."/>
            <person name="Nishikawa S."/>
            <person name="Nori F."/>
            <person name="Ohara O."/>
            <person name="Okazaki Y."/>
            <person name="Orlando V."/>
            <person name="Pang K.C."/>
            <person name="Pavan W.J."/>
            <person name="Pavesi G."/>
            <person name="Pesole G."/>
            <person name="Petrovsky N."/>
            <person name="Piazza S."/>
            <person name="Reed J."/>
            <person name="Reid J.F."/>
            <person name="Ring B.Z."/>
            <person name="Ringwald M."/>
            <person name="Rost B."/>
            <person name="Ruan Y."/>
            <person name="Salzberg S.L."/>
            <person name="Sandelin A."/>
            <person name="Schneider C."/>
            <person name="Schoenbach C."/>
            <person name="Sekiguchi K."/>
            <person name="Semple C.A."/>
            <person name="Seno S."/>
            <person name="Sessa L."/>
            <person name="Sheng Y."/>
            <person name="Shibata Y."/>
            <person name="Shimada H."/>
            <person name="Shimada K."/>
            <person name="Silva D."/>
            <person name="Sinclair B."/>
            <person name="Sperling S."/>
            <person name="Stupka E."/>
            <person name="Sugiura K."/>
            <person name="Sultana R."/>
            <person name="Takenaka Y."/>
            <person name="Taki K."/>
            <person name="Tammoja K."/>
            <person name="Tan S.L."/>
            <person name="Tang S."/>
            <person name="Taylor M.S."/>
            <person name="Tegner J."/>
            <person name="Teichmann S.A."/>
            <person name="Ueda H.R."/>
            <person name="van Nimwegen E."/>
            <person name="Verardo R."/>
            <person name="Wei C.L."/>
            <person name="Yagi K."/>
            <person name="Yamanishi H."/>
            <person name="Zabarovsky E."/>
            <person name="Zhu S."/>
            <person name="Zimmer A."/>
            <person name="Hide W."/>
            <person name="Bult C."/>
            <person name="Grimmond S.M."/>
            <person name="Teasdale R.D."/>
            <person name="Liu E.T."/>
            <person name="Brusic V."/>
            <person name="Quackenbush J."/>
            <person name="Wahlestedt C."/>
            <person name="Mattick J.S."/>
            <person name="Hume D.A."/>
            <person name="Kai C."/>
            <person name="Sasaki D."/>
            <person name="Tomaru Y."/>
            <person name="Fukuda S."/>
            <person name="Kanamori-Katayama M."/>
            <person name="Suzuki M."/>
            <person name="Aoki J."/>
            <person name="Arakawa T."/>
            <person name="Iida J."/>
            <person name="Imamura K."/>
            <person name="Itoh M."/>
            <person name="Kato T."/>
            <person name="Kawaji H."/>
            <person name="Kawagashira N."/>
            <person name="Kawashima T."/>
            <person name="Kojima M."/>
            <person name="Kondo S."/>
            <person name="Konno H."/>
            <person name="Nakano K."/>
            <person name="Ninomiya N."/>
            <person name="Nishio T."/>
            <person name="Okada M."/>
            <person name="Plessy C."/>
            <person name="Shibata K."/>
            <person name="Shiraki T."/>
            <person name="Suzuki S."/>
            <person name="Tagami M."/>
            <person name="Waki K."/>
            <person name="Watahiki A."/>
            <person name="Okamura-Oho Y."/>
            <person name="Suzuki H."/>
            <person name="Kawai J."/>
            <person name="Hayashizaki Y."/>
        </authorList>
    </citation>
    <scope>NUCLEOTIDE SEQUENCE [LARGE SCALE MRNA]</scope>
    <source>
        <strain>C57BL/6J</strain>
        <tissue>Medulla oblongata</tissue>
        <tissue>Placenta</tissue>
        <tissue>Skin</tissue>
    </source>
</reference>
<reference key="3">
    <citation type="journal article" date="2004" name="Genome Res.">
        <title>The status, quality, and expansion of the NIH full-length cDNA project: the Mammalian Gene Collection (MGC).</title>
        <authorList>
            <consortium name="The MGC Project Team"/>
        </authorList>
    </citation>
    <scope>NUCLEOTIDE SEQUENCE [LARGE SCALE MRNA]</scope>
    <source>
        <strain>C57BL/6J</strain>
        <strain>FVB/N</strain>
        <tissue>Brain</tissue>
        <tissue>Salivary gland</tissue>
    </source>
</reference>
<reference key="4">
    <citation type="journal article" date="2007" name="Mol. Cell. Proteomics">
        <title>Proteomics characterization of mouse kidney peroxisomes by tandem mass spectrometry and protein correlation profiling.</title>
        <authorList>
            <person name="Wiese S."/>
            <person name="Gronemeyer T."/>
            <person name="Ofman R."/>
            <person name="Kunze M."/>
            <person name="Grou C.P."/>
            <person name="Almeida J.A."/>
            <person name="Eisenacher M."/>
            <person name="Stephan C."/>
            <person name="Hayen H."/>
            <person name="Schollenberger L."/>
            <person name="Korosec T."/>
            <person name="Waterham H.R."/>
            <person name="Schliebs W."/>
            <person name="Erdmann R."/>
            <person name="Berger J."/>
            <person name="Meyer H.E."/>
            <person name="Just W."/>
            <person name="Azevedo J.E."/>
            <person name="Wanders R.J."/>
            <person name="Warscheid B."/>
        </authorList>
    </citation>
    <scope>SUBCELLULAR LOCATION</scope>
</reference>
<reference key="5">
    <citation type="journal article" date="2010" name="PLoS ONE">
        <title>Stressed-induced TMEM135 protein is part of a conserved genetic network involved in fat storage and longevity regulation in Caenorhabditis elegans.</title>
        <authorList>
            <person name="Exil V.J."/>
            <person name="Silva Avila D."/>
            <person name="Benedetto A."/>
            <person name="Exil E.A."/>
            <person name="Adams M.R."/>
            <person name="Au C."/>
            <person name="Aschner M."/>
        </authorList>
    </citation>
    <scope>INDUCTION</scope>
</reference>
<reference key="6">
    <citation type="journal article" date="2016" name="Elife">
        <title>Mouse Tmem135 mutation reveals a mechanism involving mitochondrial dynamics that leads to age-dependent retinal pathologies.</title>
        <authorList>
            <person name="Lee W.H."/>
            <person name="Higuchi H."/>
            <person name="Ikeda S."/>
            <person name="Macke E.L."/>
            <person name="Takimoto T."/>
            <person name="Pattnaik B.R."/>
            <person name="Liu C."/>
            <person name="Chu L.F."/>
            <person name="Siepka S.M."/>
            <person name="Krentz K.J."/>
            <person name="Rubinstein C.D."/>
            <person name="Kalejta R.F."/>
            <person name="Thomson J.A."/>
            <person name="Mullins R.F."/>
            <person name="Takahashi J.S."/>
            <person name="Pinto L.H."/>
            <person name="Ikeda A."/>
        </authorList>
    </citation>
    <scope>FUNCTION</scope>
    <scope>SUBCELLULAR LOCATION</scope>
    <scope>DISRUPTION PHENOTYPE</scope>
</reference>
<accession>Q9CYV5</accession>
<accession>Q8BSY5</accession>
<accession>Q8CCZ6</accession>
<accession>Q8CE78</accession>
<organism>
    <name type="scientific">Mus musculus</name>
    <name type="common">Mouse</name>
    <dbReference type="NCBI Taxonomy" id="10090"/>
    <lineage>
        <taxon>Eukaryota</taxon>
        <taxon>Metazoa</taxon>
        <taxon>Chordata</taxon>
        <taxon>Craniata</taxon>
        <taxon>Vertebrata</taxon>
        <taxon>Euteleostomi</taxon>
        <taxon>Mammalia</taxon>
        <taxon>Eutheria</taxon>
        <taxon>Euarchontoglires</taxon>
        <taxon>Glires</taxon>
        <taxon>Rodentia</taxon>
        <taxon>Myomorpha</taxon>
        <taxon>Muroidea</taxon>
        <taxon>Muridae</taxon>
        <taxon>Murinae</taxon>
        <taxon>Mus</taxon>
        <taxon>Mus</taxon>
    </lineage>
</organism>
<sequence>MAALSKSIPHNCYEIGHTWHPSCRVSFLQITWGALEESLRIYAPLYLIAAVLRKRKLEYYLYKLLPEILQSASFLTANGALYITFFCILRKILGKFYSWTPGFGAALPASYVAILIERKSRRGLLTIYMANLATETLFRMGVARGTITTLRNGEVLLFCITAAMYMFFFRCKDGLKGFTFSALRFIVGKEEIPTHSYSPETAYAKVEQKREKHKGTPRAMSIIALVRTLVDSVCKHGPRHRCCKHYEDNCISYCIKGFIRMFSVGYLIQCCLRIPSAFRHLFTEPSRLLSLFYNKENFQLGAFLGSFVSIYKGTSCFLRWIRNLDDELHAIVAGFLAGVSMMFYKSTTISMYLASKLVETMYFKGIEAGKVPYFPQADTIIYSISTAICFHAAVMEVQNLRPSYWKFLLRLTKGRFALMNRKALDVFGTGASREFHNFIPRLDPRYTVVTPELPIDFS</sequence>
<name>TM135_MOUSE</name>
<feature type="chain" id="PRO_0000284623" description="Transmembrane protein 135">
    <location>
        <begin position="1"/>
        <end position="458"/>
    </location>
</feature>
<feature type="transmembrane region" description="Helical" evidence="2">
    <location>
        <begin position="68"/>
        <end position="88"/>
    </location>
</feature>
<feature type="transmembrane region" description="Helical" evidence="2">
    <location>
        <begin position="96"/>
        <end position="116"/>
    </location>
</feature>
<feature type="transmembrane region" description="Helical" evidence="2">
    <location>
        <begin position="149"/>
        <end position="169"/>
    </location>
</feature>
<feature type="transmembrane region" description="Helical" evidence="2">
    <location>
        <begin position="298"/>
        <end position="318"/>
    </location>
</feature>
<feature type="transmembrane region" description="Helical" evidence="2">
    <location>
        <begin position="331"/>
        <end position="351"/>
    </location>
</feature>
<feature type="transmembrane region" description="Helical" evidence="2">
    <location>
        <begin position="377"/>
        <end position="397"/>
    </location>
</feature>
<feature type="sequence conflict" description="In Ref. 2; BAC26151." evidence="6" ref="2">
    <original>F</original>
    <variation>L</variation>
    <location>
        <position position="167"/>
    </location>
</feature>
<feature type="sequence conflict" description="In Ref. 2; BAC25933." evidence="6" ref="2">
    <original>V</original>
    <variation>E</variation>
    <location>
        <position position="230"/>
    </location>
</feature>
<proteinExistence type="evidence at transcript level"/>
<keyword id="KW-0472">Membrane</keyword>
<keyword id="KW-0496">Mitochondrion</keyword>
<keyword id="KW-0576">Peroxisome</keyword>
<keyword id="KW-1185">Reference proteome</keyword>
<keyword id="KW-0812">Transmembrane</keyword>
<keyword id="KW-1133">Transmembrane helix</keyword>
<dbReference type="EMBL" id="AY040841">
    <property type="protein sequence ID" value="AAK84685.1"/>
    <property type="molecule type" value="mRNA"/>
</dbReference>
<dbReference type="EMBL" id="AK013269">
    <property type="protein sequence ID" value="BAB28760.1"/>
    <property type="molecule type" value="mRNA"/>
</dbReference>
<dbReference type="EMBL" id="AK028401">
    <property type="protein sequence ID" value="BAC25933.1"/>
    <property type="molecule type" value="mRNA"/>
</dbReference>
<dbReference type="EMBL" id="AK028846">
    <property type="protein sequence ID" value="BAC26151.1"/>
    <property type="molecule type" value="mRNA"/>
</dbReference>
<dbReference type="EMBL" id="AK031818">
    <property type="protein sequence ID" value="BAC27564.1"/>
    <property type="molecule type" value="mRNA"/>
</dbReference>
<dbReference type="EMBL" id="BC033279">
    <property type="protein sequence ID" value="AAH33279.1"/>
    <property type="molecule type" value="mRNA"/>
</dbReference>
<dbReference type="EMBL" id="BC050931">
    <property type="protein sequence ID" value="AAH50931.1"/>
    <property type="molecule type" value="mRNA"/>
</dbReference>
<dbReference type="CCDS" id="CCDS21440.1"/>
<dbReference type="RefSeq" id="NP_082619.3">
    <property type="nucleotide sequence ID" value="NM_028343.4"/>
</dbReference>
<dbReference type="FunCoup" id="Q9CYV5">
    <property type="interactions" value="2166"/>
</dbReference>
<dbReference type="STRING" id="10090.ENSMUSP00000042783"/>
<dbReference type="GlyGen" id="Q9CYV5">
    <property type="glycosylation" value="1 site, 1 O-linked glycan (1 site)"/>
</dbReference>
<dbReference type="iPTMnet" id="Q9CYV5"/>
<dbReference type="PhosphoSitePlus" id="Q9CYV5"/>
<dbReference type="SwissPalm" id="Q9CYV5"/>
<dbReference type="jPOST" id="Q9CYV5"/>
<dbReference type="PaxDb" id="10090-ENSMUSP00000042783"/>
<dbReference type="PeptideAtlas" id="Q9CYV5"/>
<dbReference type="ProteomicsDB" id="260678"/>
<dbReference type="Antibodypedia" id="31460">
    <property type="antibodies" value="50 antibodies from 18 providers"/>
</dbReference>
<dbReference type="DNASU" id="72759"/>
<dbReference type="Ensembl" id="ENSMUST00000041968.11">
    <property type="protein sequence ID" value="ENSMUSP00000042783.4"/>
    <property type="gene ID" value="ENSMUSG00000039428.12"/>
</dbReference>
<dbReference type="GeneID" id="72759"/>
<dbReference type="KEGG" id="mmu:72759"/>
<dbReference type="UCSC" id="uc009ifw.2">
    <property type="organism name" value="mouse"/>
</dbReference>
<dbReference type="AGR" id="MGI:1920009"/>
<dbReference type="CTD" id="65084"/>
<dbReference type="MGI" id="MGI:1920009">
    <property type="gene designation" value="Tmem135"/>
</dbReference>
<dbReference type="VEuPathDB" id="HostDB:ENSMUSG00000039428"/>
<dbReference type="eggNOG" id="KOG1398">
    <property type="taxonomic scope" value="Eukaryota"/>
</dbReference>
<dbReference type="GeneTree" id="ENSGT00390000000303"/>
<dbReference type="HOGENOM" id="CLU_046474_0_0_1"/>
<dbReference type="InParanoid" id="Q9CYV5"/>
<dbReference type="OMA" id="HPWTDKC"/>
<dbReference type="OrthoDB" id="291792at2759"/>
<dbReference type="PhylomeDB" id="Q9CYV5"/>
<dbReference type="TreeFam" id="TF314580"/>
<dbReference type="BioGRID-ORCS" id="72759">
    <property type="hits" value="4 hits in 77 CRISPR screens"/>
</dbReference>
<dbReference type="ChiTaRS" id="Tmem135">
    <property type="organism name" value="mouse"/>
</dbReference>
<dbReference type="PRO" id="PR:Q9CYV5"/>
<dbReference type="Proteomes" id="UP000000589">
    <property type="component" value="Chromosome 7"/>
</dbReference>
<dbReference type="RNAct" id="Q9CYV5">
    <property type="molecule type" value="protein"/>
</dbReference>
<dbReference type="Bgee" id="ENSMUSG00000039428">
    <property type="expression patterns" value="Expressed in epithelium of small intestine and 244 other cell types or tissues"/>
</dbReference>
<dbReference type="ExpressionAtlas" id="Q9CYV5">
    <property type="expression patterns" value="baseline and differential"/>
</dbReference>
<dbReference type="GO" id="GO:0005737">
    <property type="term" value="C:cytoplasm"/>
    <property type="evidence" value="ECO:0000266"/>
    <property type="project" value="MGI"/>
</dbReference>
<dbReference type="GO" id="GO:0005811">
    <property type="term" value="C:lipid droplet"/>
    <property type="evidence" value="ECO:0000314"/>
    <property type="project" value="MGI"/>
</dbReference>
<dbReference type="GO" id="GO:0031966">
    <property type="term" value="C:mitochondrial membrane"/>
    <property type="evidence" value="ECO:0007669"/>
    <property type="project" value="UniProtKB-SubCell"/>
</dbReference>
<dbReference type="GO" id="GO:0005739">
    <property type="term" value="C:mitochondrion"/>
    <property type="evidence" value="ECO:0000314"/>
    <property type="project" value="UniProtKB"/>
</dbReference>
<dbReference type="GO" id="GO:0005778">
    <property type="term" value="C:peroxisomal membrane"/>
    <property type="evidence" value="ECO:0000315"/>
    <property type="project" value="MGI"/>
</dbReference>
<dbReference type="GO" id="GO:0005777">
    <property type="term" value="C:peroxisome"/>
    <property type="evidence" value="ECO:0000314"/>
    <property type="project" value="UniProtKB"/>
</dbReference>
<dbReference type="GO" id="GO:0005319">
    <property type="term" value="F:lipid transporter activity"/>
    <property type="evidence" value="ECO:0000315"/>
    <property type="project" value="MGI"/>
</dbReference>
<dbReference type="GO" id="GO:0036109">
    <property type="term" value="P:alpha-linolenic acid metabolic process"/>
    <property type="evidence" value="ECO:0000315"/>
    <property type="project" value="MGI"/>
</dbReference>
<dbReference type="GO" id="GO:0008340">
    <property type="term" value="P:determination of adult lifespan"/>
    <property type="evidence" value="ECO:0000266"/>
    <property type="project" value="MGI"/>
</dbReference>
<dbReference type="GO" id="GO:1901570">
    <property type="term" value="P:fatty acid derivative biosynthetic process"/>
    <property type="evidence" value="ECO:0000315"/>
    <property type="project" value="MGI"/>
</dbReference>
<dbReference type="GO" id="GO:1901571">
    <property type="term" value="P:fatty acid derivative transport"/>
    <property type="evidence" value="ECO:0000315"/>
    <property type="project" value="MGI"/>
</dbReference>
<dbReference type="GO" id="GO:0042759">
    <property type="term" value="P:long-chain fatty acid biosynthetic process"/>
    <property type="evidence" value="ECO:0000315"/>
    <property type="project" value="MGI"/>
</dbReference>
<dbReference type="GO" id="GO:0015909">
    <property type="term" value="P:long-chain fatty acid transport"/>
    <property type="evidence" value="ECO:0000315"/>
    <property type="project" value="MGI"/>
</dbReference>
<dbReference type="GO" id="GO:0007005">
    <property type="term" value="P:mitochondrion organization"/>
    <property type="evidence" value="ECO:0000315"/>
    <property type="project" value="MGI"/>
</dbReference>
<dbReference type="GO" id="GO:0007031">
    <property type="term" value="P:peroxisome organization"/>
    <property type="evidence" value="ECO:0000250"/>
    <property type="project" value="UniProtKB"/>
</dbReference>
<dbReference type="GO" id="GO:0010628">
    <property type="term" value="P:positive regulation of gene expression"/>
    <property type="evidence" value="ECO:0000266"/>
    <property type="project" value="MGI"/>
</dbReference>
<dbReference type="GO" id="GO:0010884">
    <property type="term" value="P:positive regulation of lipid storage"/>
    <property type="evidence" value="ECO:0000266"/>
    <property type="project" value="MGI"/>
</dbReference>
<dbReference type="GO" id="GO:0010918">
    <property type="term" value="P:positive regulation of mitochondrial membrane potential"/>
    <property type="evidence" value="ECO:0000266"/>
    <property type="project" value="MGI"/>
</dbReference>
<dbReference type="GO" id="GO:0090140">
    <property type="term" value="P:regulation of mitochondrial fission"/>
    <property type="evidence" value="ECO:0000315"/>
    <property type="project" value="UniProtKB"/>
</dbReference>
<dbReference type="GO" id="GO:0002082">
    <property type="term" value="P:regulation of oxidative phosphorylation"/>
    <property type="evidence" value="ECO:0000315"/>
    <property type="project" value="MGI"/>
</dbReference>
<dbReference type="GO" id="GO:0009409">
    <property type="term" value="P:response to cold"/>
    <property type="evidence" value="ECO:0000314"/>
    <property type="project" value="MGI"/>
</dbReference>
<dbReference type="GO" id="GO:0032094">
    <property type="term" value="P:response to food"/>
    <property type="evidence" value="ECO:0000314"/>
    <property type="project" value="MGI"/>
</dbReference>
<dbReference type="GO" id="GO:0003406">
    <property type="term" value="P:retinal pigment epithelium development"/>
    <property type="evidence" value="ECO:0000315"/>
    <property type="project" value="MGI"/>
</dbReference>
<dbReference type="GO" id="GO:0006636">
    <property type="term" value="P:unsaturated fatty acid biosynthetic process"/>
    <property type="evidence" value="ECO:0000315"/>
    <property type="project" value="MGI"/>
</dbReference>
<dbReference type="InterPro" id="IPR026749">
    <property type="entry name" value="Tmem135"/>
</dbReference>
<dbReference type="InterPro" id="IPR031926">
    <property type="entry name" value="TMEM135_N"/>
</dbReference>
<dbReference type="PANTHER" id="PTHR12459:SF15">
    <property type="entry name" value="TRANSMEMBRANE PROTEIN 135"/>
    <property type="match status" value="1"/>
</dbReference>
<dbReference type="PANTHER" id="PTHR12459">
    <property type="entry name" value="TRANSMEMBRANE PROTEIN 135-RELATED"/>
    <property type="match status" value="1"/>
</dbReference>
<dbReference type="Pfam" id="PF02466">
    <property type="entry name" value="Tim17"/>
    <property type="match status" value="1"/>
</dbReference>
<dbReference type="Pfam" id="PF15982">
    <property type="entry name" value="TMEM135_C_rich"/>
    <property type="match status" value="1"/>
</dbReference>
<evidence type="ECO:0000250" key="1">
    <source>
        <dbReference type="UniProtKB" id="Q5U4F4"/>
    </source>
</evidence>
<evidence type="ECO:0000255" key="2"/>
<evidence type="ECO:0000269" key="3">
    <source>
    </source>
</evidence>
<evidence type="ECO:0000269" key="4">
    <source>
    </source>
</evidence>
<evidence type="ECO:0000303" key="5">
    <source>
    </source>
</evidence>
<evidence type="ECO:0000305" key="6"/>
<evidence type="ECO:0000305" key="7">
    <source>
    </source>
</evidence>
<evidence type="ECO:0000305" key="8">
    <source>
    </source>
</evidence>
<evidence type="ECO:0000312" key="9">
    <source>
        <dbReference type="MGI" id="MGI:1920009"/>
    </source>
</evidence>
<gene>
    <name evidence="9" type="primary">Tmem135</name>
</gene>